<proteinExistence type="evidence at transcript level"/>
<dbReference type="EC" id="2.4.1.16" evidence="8"/>
<dbReference type="EMBL" id="HG970332">
    <property type="protein sequence ID" value="CEF75468.1"/>
    <property type="molecule type" value="Genomic_DNA"/>
</dbReference>
<dbReference type="RefSeq" id="XP_011319054.1">
    <property type="nucleotide sequence ID" value="XM_011320752.1"/>
</dbReference>
<dbReference type="SMR" id="I1S097"/>
<dbReference type="STRING" id="229533.I1S097"/>
<dbReference type="KEGG" id="fgr:FGSG_10116"/>
<dbReference type="VEuPathDB" id="FungiDB:FGRAMPH1_01G07327"/>
<dbReference type="eggNOG" id="KOG2571">
    <property type="taxonomic scope" value="Eukaryota"/>
</dbReference>
<dbReference type="HOGENOM" id="CLU_004760_0_1_1"/>
<dbReference type="InParanoid" id="I1S097"/>
<dbReference type="OrthoDB" id="48176at110618"/>
<dbReference type="PHI-base" id="PHI:4660"/>
<dbReference type="Proteomes" id="UP000070720">
    <property type="component" value="Chromosome 1"/>
</dbReference>
<dbReference type="GO" id="GO:0030428">
    <property type="term" value="C:cell septum"/>
    <property type="evidence" value="ECO:0007669"/>
    <property type="project" value="TreeGrafter"/>
</dbReference>
<dbReference type="GO" id="GO:0005886">
    <property type="term" value="C:plasma membrane"/>
    <property type="evidence" value="ECO:0007669"/>
    <property type="project" value="UniProtKB-SubCell"/>
</dbReference>
<dbReference type="GO" id="GO:0004100">
    <property type="term" value="F:chitin synthase activity"/>
    <property type="evidence" value="ECO:0007669"/>
    <property type="project" value="UniProtKB-EC"/>
</dbReference>
<dbReference type="GO" id="GO:0071555">
    <property type="term" value="P:cell wall organization"/>
    <property type="evidence" value="ECO:0007669"/>
    <property type="project" value="UniProtKB-KW"/>
</dbReference>
<dbReference type="GO" id="GO:0006031">
    <property type="term" value="P:chitin biosynthetic process"/>
    <property type="evidence" value="ECO:0007669"/>
    <property type="project" value="InterPro"/>
</dbReference>
<dbReference type="CDD" id="cd04190">
    <property type="entry name" value="Chitin_synth_C"/>
    <property type="match status" value="1"/>
</dbReference>
<dbReference type="InterPro" id="IPR004835">
    <property type="entry name" value="Chitin_synth"/>
</dbReference>
<dbReference type="InterPro" id="IPR004834">
    <property type="entry name" value="Chitin_synth_fun"/>
</dbReference>
<dbReference type="InterPro" id="IPR013616">
    <property type="entry name" value="Chitin_synth_N"/>
</dbReference>
<dbReference type="InterPro" id="IPR029044">
    <property type="entry name" value="Nucleotide-diphossugar_trans"/>
</dbReference>
<dbReference type="PANTHER" id="PTHR22914">
    <property type="entry name" value="CHITIN SYNTHASE"/>
    <property type="match status" value="1"/>
</dbReference>
<dbReference type="PANTHER" id="PTHR22914:SF11">
    <property type="entry name" value="CHITIN SYNTHASE B"/>
    <property type="match status" value="1"/>
</dbReference>
<dbReference type="Pfam" id="PF01644">
    <property type="entry name" value="Chitin_synth_1"/>
    <property type="match status" value="1"/>
</dbReference>
<dbReference type="Pfam" id="PF08407">
    <property type="entry name" value="Chitin_synth_1N"/>
    <property type="match status" value="1"/>
</dbReference>
<dbReference type="SUPFAM" id="SSF53448">
    <property type="entry name" value="Nucleotide-diphospho-sugar transferases"/>
    <property type="match status" value="1"/>
</dbReference>
<protein>
    <recommendedName>
        <fullName evidence="6">Chitin synthase 3B</fullName>
        <ecNumber evidence="8">2.4.1.16</ecNumber>
    </recommendedName>
    <alternativeName>
        <fullName evidence="7">Chitin-UDP acetyl-glucosaminyl transferase 3B</fullName>
    </alternativeName>
    <alternativeName>
        <fullName evidence="6">Class-III chitin synthase 3B</fullName>
    </alternativeName>
</protein>
<organism>
    <name type="scientific">Gibberella zeae (strain ATCC MYA-4620 / CBS 123657 / FGSC 9075 / NRRL 31084 / PH-1)</name>
    <name type="common">Wheat head blight fungus</name>
    <name type="synonym">Fusarium graminearum</name>
    <dbReference type="NCBI Taxonomy" id="229533"/>
    <lineage>
        <taxon>Eukaryota</taxon>
        <taxon>Fungi</taxon>
        <taxon>Dikarya</taxon>
        <taxon>Ascomycota</taxon>
        <taxon>Pezizomycotina</taxon>
        <taxon>Sordariomycetes</taxon>
        <taxon>Hypocreomycetidae</taxon>
        <taxon>Hypocreales</taxon>
        <taxon>Nectriaceae</taxon>
        <taxon>Fusarium</taxon>
    </lineage>
</organism>
<name>CHS3B_GIBZE</name>
<evidence type="ECO:0000255" key="1"/>
<evidence type="ECO:0000255" key="2">
    <source>
        <dbReference type="PROSITE-ProRule" id="PRU00498"/>
    </source>
</evidence>
<evidence type="ECO:0000256" key="3">
    <source>
        <dbReference type="SAM" id="MobiDB-lite"/>
    </source>
</evidence>
<evidence type="ECO:0000269" key="4">
    <source>
    </source>
</evidence>
<evidence type="ECO:0000269" key="5">
    <source>
    </source>
</evidence>
<evidence type="ECO:0000303" key="6">
    <source>
    </source>
</evidence>
<evidence type="ECO:0000305" key="7"/>
<evidence type="ECO:0000305" key="8">
    <source>
    </source>
</evidence>
<evidence type="ECO:0000305" key="9">
    <source>
    </source>
</evidence>
<keyword id="KW-1003">Cell membrane</keyword>
<keyword id="KW-0961">Cell wall biogenesis/degradation</keyword>
<keyword id="KW-0325">Glycoprotein</keyword>
<keyword id="KW-0328">Glycosyltransferase</keyword>
<keyword id="KW-0472">Membrane</keyword>
<keyword id="KW-1185">Reference proteome</keyword>
<keyword id="KW-0808">Transferase</keyword>
<keyword id="KW-0812">Transmembrane</keyword>
<keyword id="KW-1133">Transmembrane helix</keyword>
<keyword id="KW-0843">Virulence</keyword>
<reference key="1">
    <citation type="journal article" date="2007" name="Science">
        <title>The Fusarium graminearum genome reveals a link between localized polymorphism and pathogen specialization.</title>
        <authorList>
            <person name="Cuomo C.A."/>
            <person name="Gueldener U."/>
            <person name="Xu J.-R."/>
            <person name="Trail F."/>
            <person name="Turgeon B.G."/>
            <person name="Di Pietro A."/>
            <person name="Walton J.D."/>
            <person name="Ma L.-J."/>
            <person name="Baker S.E."/>
            <person name="Rep M."/>
            <person name="Adam G."/>
            <person name="Antoniw J."/>
            <person name="Baldwin T."/>
            <person name="Calvo S.E."/>
            <person name="Chang Y.-L."/>
            <person name="DeCaprio D."/>
            <person name="Gale L.R."/>
            <person name="Gnerre S."/>
            <person name="Goswami R.S."/>
            <person name="Hammond-Kosack K."/>
            <person name="Harris L.J."/>
            <person name="Hilburn K."/>
            <person name="Kennell J.C."/>
            <person name="Kroken S."/>
            <person name="Magnuson J.K."/>
            <person name="Mannhaupt G."/>
            <person name="Mauceli E.W."/>
            <person name="Mewes H.-W."/>
            <person name="Mitterbauer R."/>
            <person name="Muehlbauer G."/>
            <person name="Muensterkoetter M."/>
            <person name="Nelson D."/>
            <person name="O'Donnell K."/>
            <person name="Ouellet T."/>
            <person name="Qi W."/>
            <person name="Quesneville H."/>
            <person name="Roncero M.I.G."/>
            <person name="Seong K.-Y."/>
            <person name="Tetko I.V."/>
            <person name="Urban M."/>
            <person name="Waalwijk C."/>
            <person name="Ward T.J."/>
            <person name="Yao J."/>
            <person name="Birren B.W."/>
            <person name="Kistler H.C."/>
        </authorList>
    </citation>
    <scope>NUCLEOTIDE SEQUENCE [LARGE SCALE GENOMIC DNA]</scope>
    <source>
        <strain>ATCC MYA-4620 / CBS 123657 / FGSC 9075 / NRRL 31084 / PH-1</strain>
    </source>
</reference>
<reference key="2">
    <citation type="journal article" date="2010" name="Nature">
        <title>Comparative genomics reveals mobile pathogenicity chromosomes in Fusarium.</title>
        <authorList>
            <person name="Ma L.-J."/>
            <person name="van der Does H.C."/>
            <person name="Borkovich K.A."/>
            <person name="Coleman J.J."/>
            <person name="Daboussi M.-J."/>
            <person name="Di Pietro A."/>
            <person name="Dufresne M."/>
            <person name="Freitag M."/>
            <person name="Grabherr M."/>
            <person name="Henrissat B."/>
            <person name="Houterman P.M."/>
            <person name="Kang S."/>
            <person name="Shim W.-B."/>
            <person name="Woloshuk C."/>
            <person name="Xie X."/>
            <person name="Xu J.-R."/>
            <person name="Antoniw J."/>
            <person name="Baker S.E."/>
            <person name="Bluhm B.H."/>
            <person name="Breakspear A."/>
            <person name="Brown D.W."/>
            <person name="Butchko R.A.E."/>
            <person name="Chapman S."/>
            <person name="Coulson R."/>
            <person name="Coutinho P.M."/>
            <person name="Danchin E.G.J."/>
            <person name="Diener A."/>
            <person name="Gale L.R."/>
            <person name="Gardiner D.M."/>
            <person name="Goff S."/>
            <person name="Hammond-Kosack K.E."/>
            <person name="Hilburn K."/>
            <person name="Hua-Van A."/>
            <person name="Jonkers W."/>
            <person name="Kazan K."/>
            <person name="Kodira C.D."/>
            <person name="Koehrsen M."/>
            <person name="Kumar L."/>
            <person name="Lee Y.-H."/>
            <person name="Li L."/>
            <person name="Manners J.M."/>
            <person name="Miranda-Saavedra D."/>
            <person name="Mukherjee M."/>
            <person name="Park G."/>
            <person name="Park J."/>
            <person name="Park S.-Y."/>
            <person name="Proctor R.H."/>
            <person name="Regev A."/>
            <person name="Ruiz-Roldan M.C."/>
            <person name="Sain D."/>
            <person name="Sakthikumar S."/>
            <person name="Sykes S."/>
            <person name="Schwartz D.C."/>
            <person name="Turgeon B.G."/>
            <person name="Wapinski I."/>
            <person name="Yoder O."/>
            <person name="Young S."/>
            <person name="Zeng Q."/>
            <person name="Zhou S."/>
            <person name="Galagan J."/>
            <person name="Cuomo C.A."/>
            <person name="Kistler H.C."/>
            <person name="Rep M."/>
        </authorList>
    </citation>
    <scope>GENOME REANNOTATION</scope>
    <source>
        <strain>ATCC MYA-4620 / CBS 123657 / FGSC 9075 / NRRL 31084 / PH-1</strain>
    </source>
</reference>
<reference key="3">
    <citation type="journal article" date="2015" name="BMC Genomics">
        <title>The completed genome sequence of the pathogenic ascomycete fungus Fusarium graminearum.</title>
        <authorList>
            <person name="King R."/>
            <person name="Urban M."/>
            <person name="Hammond-Kosack M.C.U."/>
            <person name="Hassani-Pak K."/>
            <person name="Hammond-Kosack K.E."/>
        </authorList>
    </citation>
    <scope>NUCLEOTIDE SEQUENCE [LARGE SCALE GENOMIC DNA]</scope>
    <source>
        <strain>ATCC MYA-4620 / CBS 123657 / FGSC 9075 / NRRL 31084 / PH-1</strain>
    </source>
</reference>
<reference key="4">
    <citation type="journal article" date="2015" name="Plant Biotechnol. J.">
        <title>Host-induced gene silencing of an essential chitin synthase gene confers durable resistance to Fusarium head blight and seedling blight in wheat.</title>
        <authorList>
            <person name="Cheng W."/>
            <person name="Song X.S."/>
            <person name="Li H.P."/>
            <person name="Cao L.H."/>
            <person name="Sun K."/>
            <person name="Qiu X.L."/>
            <person name="Xu Y.B."/>
            <person name="Yang P."/>
            <person name="Huang T."/>
            <person name="Zhang J.B."/>
            <person name="Qu B."/>
            <person name="Liao Y.C."/>
        </authorList>
    </citation>
    <scope>FUNCTION</scope>
    <scope>DISRUPTION PHENOTYPE</scope>
</reference>
<reference key="5">
    <citation type="journal article" date="2016" name="Sci. Rep.">
        <title>The chitin synthase FgChs2 and other FgChss co-regulate vegetative development and virulence in F. graminearum.</title>
        <authorList>
            <person name="Liu Z."/>
            <person name="Zhang X."/>
            <person name="Liu X."/>
            <person name="Fu C."/>
            <person name="Han X."/>
            <person name="Yin Y."/>
            <person name="Ma Z."/>
        </authorList>
    </citation>
    <scope>FUNCTION</scope>
    <scope>INDUCTION</scope>
</reference>
<accession>I1S097</accession>
<gene>
    <name evidence="6" type="primary">CHS3B</name>
    <name type="ORF">FG10116</name>
    <name type="ORF">FGRAMPH1_01T07327</name>
</gene>
<feature type="chain" id="PRO_0000460795" description="Chitin synthase 3B">
    <location>
        <begin position="1"/>
        <end position="905"/>
    </location>
</feature>
<feature type="transmembrane region" description="Helical" evidence="1">
    <location>
        <begin position="562"/>
        <end position="584"/>
    </location>
</feature>
<feature type="transmembrane region" description="Helical" evidence="1">
    <location>
        <begin position="618"/>
        <end position="638"/>
    </location>
</feature>
<feature type="transmembrane region" description="Helical" evidence="1">
    <location>
        <begin position="653"/>
        <end position="673"/>
    </location>
</feature>
<feature type="transmembrane region" description="Helical" evidence="1">
    <location>
        <begin position="705"/>
        <end position="725"/>
    </location>
</feature>
<feature type="transmembrane region" description="Helical" evidence="1">
    <location>
        <begin position="733"/>
        <end position="753"/>
    </location>
</feature>
<feature type="transmembrane region" description="Helical" evidence="1">
    <location>
        <begin position="832"/>
        <end position="852"/>
    </location>
</feature>
<feature type="transmembrane region" description="Helical" evidence="1">
    <location>
        <begin position="873"/>
        <end position="893"/>
    </location>
</feature>
<feature type="region of interest" description="Disordered" evidence="3">
    <location>
        <begin position="1"/>
        <end position="136"/>
    </location>
</feature>
<feature type="compositionally biased region" description="Basic and acidic residues" evidence="3">
    <location>
        <begin position="1"/>
        <end position="10"/>
    </location>
</feature>
<feature type="compositionally biased region" description="Gly residues" evidence="3">
    <location>
        <begin position="81"/>
        <end position="93"/>
    </location>
</feature>
<feature type="glycosylation site" description="N-linked (GlcNAc...) asparagine" evidence="2">
    <location>
        <position position="536"/>
    </location>
</feature>
<feature type="glycosylation site" description="N-linked (GlcNAc...) asparagine" evidence="2">
    <location>
        <position position="601"/>
    </location>
</feature>
<comment type="function">
    <text evidence="4 8">Polymerizes chitin, a structural polymer of the cell wall and septum, by transferring the sugar moiety of UDP-GlcNAc to the non-reducing end of the growing chitin polymer (Probable). Plays essential functions in fungal survival and host infection (PubMed:25735638).</text>
</comment>
<comment type="catalytic activity">
    <reaction evidence="9">
        <text>[(1-&gt;4)-N-acetyl-beta-D-glucosaminyl](n) + UDP-N-acetyl-alpha-D-glucosamine = [(1-&gt;4)-N-acetyl-beta-D-glucosaminyl](n+1) + UDP + H(+)</text>
        <dbReference type="Rhea" id="RHEA:16637"/>
        <dbReference type="Rhea" id="RHEA-COMP:9593"/>
        <dbReference type="Rhea" id="RHEA-COMP:9595"/>
        <dbReference type="ChEBI" id="CHEBI:15378"/>
        <dbReference type="ChEBI" id="CHEBI:17029"/>
        <dbReference type="ChEBI" id="CHEBI:57705"/>
        <dbReference type="ChEBI" id="CHEBI:58223"/>
        <dbReference type="EC" id="2.4.1.16"/>
    </reaction>
    <physiologicalReaction direction="left-to-right" evidence="9">
        <dbReference type="Rhea" id="RHEA:16638"/>
    </physiologicalReaction>
</comment>
<comment type="subcellular location">
    <subcellularLocation>
        <location evidence="7">Cell membrane</location>
        <topology evidence="1">Multi-pass membrane protein</topology>
    </subcellularLocation>
</comment>
<comment type="induction">
    <text evidence="4 5">Exhibits lower expression levels in hyphae than in germinating conidia (PubMed:27725723). Exhibits the highest expression levels during colonization of wheat (PubMed:25735638).</text>
</comment>
<comment type="disruption phenotype">
    <text evidence="4">Leads to lethality.</text>
</comment>
<comment type="similarity">
    <text evidence="7">Belongs to the chitin synthase family. Class III subfamily.</text>
</comment>
<sequence>MAYNGRDQEYGGHALQDLPAGSSQYHLPPQENDEEQGRGLLNSGYEQDRLGARTPPDRPVSAYSLTESYAPGASSAMPGQGPTGYGDTGGSFGQFGNLDANAPFPRPDSAFDPEDSWVERQQQPQMGGGGGLGRSKTRKIKLVQGSVLSIDYPVPSAIKNAVQPQYRDAESGTEEFHKMRYTAATCDPNDFTLKNGYDLRPRMYNRHTELLIAITYYNEDKVLLARTLHHTMQNIRDIVNLKKSTFWNKGGPAWQKIVVCLVFDGIDKADKNTLDVLATVGVYQDGVIKKDVDGKETVAHIFEYTSQLSVTPNQQLIRPTNEGSQNLPPVQMIFCLKQKNTKKINSHRWLFNAFGRILNPEVCILLDAGTKPSPRSLLALWEGFYNDKDLGGACGEIHAMLGKGGKKLFNPLVAVQNFEYKISNILDKPLESSFGYVSVLPGAFSAYRFRAIMGRPLEQYFHGDHTLSKMLGKKGIDGMNIFKKNMFLAEDRILCFELVAKAGQKWHLSYIKAAKGETDVPEGAAEFISQRRRWLNGSFAATLYSLMHFGRMYKSGHNIIRMFFLHIQLIYTTLNTMFAWFSLGSYWLTTSVIMDLVGKPNATSGVHAWPFGDTGTPIVNALLQYLYLAFVMLQFILALGNRPKGSKFTYIASFMVFGLIQGYILVLSAYLVVRAFDTPIGDQISFASTDAFLNSFFGGSSAGGVILVALITIYGLNFIASFMYLDPWHMFHSFPYYLVLMSTYINILMVYAFNNWHDVSWGTKGSDKAEALPSAHVTKGEKNEVVVEEVEKEQEDIDSQFEQTVRRALAPFKEEEEVEKADVEDGYKSFRTGLVVCWLFGNILLIVCITSTNFDNLGWGEPATERKAHYFQFLLYATAVLSLVRFFGFLWFLGRTGIMCCFSRN</sequence>